<name>ETT1_SCHPO</name>
<dbReference type="EMBL" id="CU329672">
    <property type="protein sequence ID" value="CAB60681.1"/>
    <property type="molecule type" value="Genomic_DNA"/>
</dbReference>
<dbReference type="EMBL" id="AB027975">
    <property type="protein sequence ID" value="BAA87279.1"/>
    <property type="molecule type" value="Genomic_DNA"/>
</dbReference>
<dbReference type="EMBL" id="AB027866">
    <property type="protein sequence ID" value="BAA87170.1"/>
    <property type="molecule type" value="Genomic_DNA"/>
</dbReference>
<dbReference type="PIR" id="T50441">
    <property type="entry name" value="T50441"/>
</dbReference>
<dbReference type="RefSeq" id="NP_588083.1">
    <property type="nucleotide sequence ID" value="NM_001023075.2"/>
</dbReference>
<dbReference type="PDB" id="3MSV">
    <property type="method" value="X-ray"/>
    <property type="resolution" value="2.18 A"/>
    <property type="chains" value="A/B=1-393"/>
</dbReference>
<dbReference type="PDB" id="3QTM">
    <property type="method" value="X-ray"/>
    <property type="resolution" value="2.15 A"/>
    <property type="chains" value="A/B=56-393"/>
</dbReference>
<dbReference type="PDB" id="3QTN">
    <property type="method" value="X-ray"/>
    <property type="resolution" value="3.50 A"/>
    <property type="chains" value="B=56-393"/>
</dbReference>
<dbReference type="PDBsum" id="3MSV"/>
<dbReference type="PDBsum" id="3QTM"/>
<dbReference type="PDBsum" id="3QTN"/>
<dbReference type="SMR" id="Q9USJ7"/>
<dbReference type="BioGRID" id="276001">
    <property type="interactions" value="25"/>
</dbReference>
<dbReference type="DIP" id="DIP-57178N"/>
<dbReference type="FunCoup" id="Q9USJ7">
    <property type="interactions" value="292"/>
</dbReference>
<dbReference type="IntAct" id="Q9USJ7">
    <property type="interactions" value="16"/>
</dbReference>
<dbReference type="MINT" id="Q9USJ7"/>
<dbReference type="STRING" id="284812.Q9USJ7"/>
<dbReference type="iPTMnet" id="Q9USJ7"/>
<dbReference type="PaxDb" id="4896-SPCC4B3.07.1"/>
<dbReference type="EnsemblFungi" id="SPCC4B3.07.1">
    <property type="protein sequence ID" value="SPCC4B3.07.1:pep"/>
    <property type="gene ID" value="SPCC4B3.07"/>
</dbReference>
<dbReference type="GeneID" id="2539438"/>
<dbReference type="KEGG" id="spo:2539438"/>
<dbReference type="PomBase" id="SPCC4B3.07">
    <property type="gene designation" value="nro1"/>
</dbReference>
<dbReference type="VEuPathDB" id="FungiDB:SPCC4B3.07"/>
<dbReference type="HOGENOM" id="CLU_710101_0_0_1"/>
<dbReference type="InParanoid" id="Q9USJ7"/>
<dbReference type="OMA" id="WGLYEMS"/>
<dbReference type="EvolutionaryTrace" id="Q9USJ7"/>
<dbReference type="PRO" id="PR:Q9USJ7"/>
<dbReference type="Proteomes" id="UP000002485">
    <property type="component" value="Chromosome III"/>
</dbReference>
<dbReference type="GO" id="GO:0005829">
    <property type="term" value="C:cytosol"/>
    <property type="evidence" value="ECO:0007005"/>
    <property type="project" value="PomBase"/>
</dbReference>
<dbReference type="GO" id="GO:0005634">
    <property type="term" value="C:nucleus"/>
    <property type="evidence" value="ECO:0000314"/>
    <property type="project" value="PomBase"/>
</dbReference>
<dbReference type="GO" id="GO:0043169">
    <property type="term" value="F:cation binding"/>
    <property type="evidence" value="ECO:0000269"/>
    <property type="project" value="PomBase"/>
</dbReference>
<dbReference type="GO" id="GO:0004857">
    <property type="term" value="F:enzyme inhibitor activity"/>
    <property type="evidence" value="ECO:0000269"/>
    <property type="project" value="PomBase"/>
</dbReference>
<dbReference type="GO" id="GO:0071456">
    <property type="term" value="P:cellular response to hypoxia"/>
    <property type="evidence" value="ECO:0000314"/>
    <property type="project" value="PomBase"/>
</dbReference>
<dbReference type="GO" id="GO:2000640">
    <property type="term" value="P:positive regulation of SREBP signaling pathway"/>
    <property type="evidence" value="ECO:0000315"/>
    <property type="project" value="PomBase"/>
</dbReference>
<dbReference type="GO" id="GO:0045944">
    <property type="term" value="P:positive regulation of transcription by RNA polymerase II"/>
    <property type="evidence" value="ECO:0000316"/>
    <property type="project" value="PomBase"/>
</dbReference>
<dbReference type="GO" id="GO:0006417">
    <property type="term" value="P:regulation of translation"/>
    <property type="evidence" value="ECO:0007669"/>
    <property type="project" value="UniProtKB-KW"/>
</dbReference>
<dbReference type="GO" id="GO:0032933">
    <property type="term" value="P:SREBP signaling pathway"/>
    <property type="evidence" value="ECO:0000316"/>
    <property type="project" value="PomBase"/>
</dbReference>
<dbReference type="InterPro" id="IPR024318">
    <property type="entry name" value="Nro1/ETT1"/>
</dbReference>
<dbReference type="InterPro" id="IPR055243">
    <property type="entry name" value="Nro1_C"/>
</dbReference>
<dbReference type="PANTHER" id="PTHR28290">
    <property type="entry name" value="ENHANCER OF TRANSLATION TERMINATION 1"/>
    <property type="match status" value="1"/>
</dbReference>
<dbReference type="PANTHER" id="PTHR28290:SF1">
    <property type="entry name" value="ENHANCER OF TRANSLATION TERMINATION 1"/>
    <property type="match status" value="1"/>
</dbReference>
<dbReference type="Pfam" id="PF12753">
    <property type="entry name" value="Nro1"/>
    <property type="match status" value="1"/>
</dbReference>
<dbReference type="Pfam" id="PF22329">
    <property type="entry name" value="Nro1_C"/>
    <property type="match status" value="1"/>
</dbReference>
<proteinExistence type="evidence at protein level"/>
<keyword id="KW-0002">3D-structure</keyword>
<keyword id="KW-0963">Cytoplasm</keyword>
<keyword id="KW-0539">Nucleus</keyword>
<keyword id="KW-1185">Reference proteome</keyword>
<keyword id="KW-0804">Transcription</keyword>
<keyword id="KW-0805">Transcription regulation</keyword>
<keyword id="KW-0810">Translation regulation</keyword>
<accession>Q9USJ7</accession>
<accession>Q9UTV3</accession>
<accession>Q9UU19</accession>
<sequence length="393" mass="44450">MIGRRPQGLRAAASLKKQQQLEKQKQEASYELSGNSSPSKENGSENVDNGEMEDETMLVYTEEDNISQLWGLYEMSREKLENDDIDASVSLVFGTIHEADRILRNTEDISTLPKDFHAAYSSALLAVSELFEIAQKRLKETNTEESYIDAAIERAQLGLDAPGNESRLFLALARAYLEKVRVLVWRHDNEESLANIPVTQLVNPYIEKAIQYLRPLAQDSTEYFDALTPDSLRPLYILSSYLFQFGDQFSEAFLLDVCSIITALWLKSVVDPNTPAYYKLIAQEAVLNNYTTFAEYYMDLLDNSESNVDDLINKASSWLNNSVDTWNVIYTLDKSPERLLKLADIKMDLAQIVQDEASQDNYLKEACNAIKEAQGSGVELSPDYVEFVEAYSA</sequence>
<protein>
    <recommendedName>
        <fullName>Negative regulator of ofd1</fullName>
    </recommendedName>
</protein>
<reference key="1">
    <citation type="journal article" date="2002" name="Nature">
        <title>The genome sequence of Schizosaccharomyces pombe.</title>
        <authorList>
            <person name="Wood V."/>
            <person name="Gwilliam R."/>
            <person name="Rajandream M.A."/>
            <person name="Lyne M.H."/>
            <person name="Lyne R."/>
            <person name="Stewart A."/>
            <person name="Sgouros J.G."/>
            <person name="Peat N."/>
            <person name="Hayles J."/>
            <person name="Baker S.G."/>
            <person name="Basham D."/>
            <person name="Bowman S."/>
            <person name="Brooks K."/>
            <person name="Brown D."/>
            <person name="Brown S."/>
            <person name="Chillingworth T."/>
            <person name="Churcher C.M."/>
            <person name="Collins M."/>
            <person name="Connor R."/>
            <person name="Cronin A."/>
            <person name="Davis P."/>
            <person name="Feltwell T."/>
            <person name="Fraser A."/>
            <person name="Gentles S."/>
            <person name="Goble A."/>
            <person name="Hamlin N."/>
            <person name="Harris D.E."/>
            <person name="Hidalgo J."/>
            <person name="Hodgson G."/>
            <person name="Holroyd S."/>
            <person name="Hornsby T."/>
            <person name="Howarth S."/>
            <person name="Huckle E.J."/>
            <person name="Hunt S."/>
            <person name="Jagels K."/>
            <person name="James K.D."/>
            <person name="Jones L."/>
            <person name="Jones M."/>
            <person name="Leather S."/>
            <person name="McDonald S."/>
            <person name="McLean J."/>
            <person name="Mooney P."/>
            <person name="Moule S."/>
            <person name="Mungall K.L."/>
            <person name="Murphy L.D."/>
            <person name="Niblett D."/>
            <person name="Odell C."/>
            <person name="Oliver K."/>
            <person name="O'Neil S."/>
            <person name="Pearson D."/>
            <person name="Quail M.A."/>
            <person name="Rabbinowitsch E."/>
            <person name="Rutherford K.M."/>
            <person name="Rutter S."/>
            <person name="Saunders D."/>
            <person name="Seeger K."/>
            <person name="Sharp S."/>
            <person name="Skelton J."/>
            <person name="Simmonds M.N."/>
            <person name="Squares R."/>
            <person name="Squares S."/>
            <person name="Stevens K."/>
            <person name="Taylor K."/>
            <person name="Taylor R.G."/>
            <person name="Tivey A."/>
            <person name="Walsh S.V."/>
            <person name="Warren T."/>
            <person name="Whitehead S."/>
            <person name="Woodward J.R."/>
            <person name="Volckaert G."/>
            <person name="Aert R."/>
            <person name="Robben J."/>
            <person name="Grymonprez B."/>
            <person name="Weltjens I."/>
            <person name="Vanstreels E."/>
            <person name="Rieger M."/>
            <person name="Schaefer M."/>
            <person name="Mueller-Auer S."/>
            <person name="Gabel C."/>
            <person name="Fuchs M."/>
            <person name="Duesterhoeft A."/>
            <person name="Fritzc C."/>
            <person name="Holzer E."/>
            <person name="Moestl D."/>
            <person name="Hilbert H."/>
            <person name="Borzym K."/>
            <person name="Langer I."/>
            <person name="Beck A."/>
            <person name="Lehrach H."/>
            <person name="Reinhardt R."/>
            <person name="Pohl T.M."/>
            <person name="Eger P."/>
            <person name="Zimmermann W."/>
            <person name="Wedler H."/>
            <person name="Wambutt R."/>
            <person name="Purnelle B."/>
            <person name="Goffeau A."/>
            <person name="Cadieu E."/>
            <person name="Dreano S."/>
            <person name="Gloux S."/>
            <person name="Lelaure V."/>
            <person name="Mottier S."/>
            <person name="Galibert F."/>
            <person name="Aves S.J."/>
            <person name="Xiang Z."/>
            <person name="Hunt C."/>
            <person name="Moore K."/>
            <person name="Hurst S.M."/>
            <person name="Lucas M."/>
            <person name="Rochet M."/>
            <person name="Gaillardin C."/>
            <person name="Tallada V.A."/>
            <person name="Garzon A."/>
            <person name="Thode G."/>
            <person name="Daga R.R."/>
            <person name="Cruzado L."/>
            <person name="Jimenez J."/>
            <person name="Sanchez M."/>
            <person name="del Rey F."/>
            <person name="Benito J."/>
            <person name="Dominguez A."/>
            <person name="Revuelta J.L."/>
            <person name="Moreno S."/>
            <person name="Armstrong J."/>
            <person name="Forsburg S.L."/>
            <person name="Cerutti L."/>
            <person name="Lowe T."/>
            <person name="McCombie W.R."/>
            <person name="Paulsen I."/>
            <person name="Potashkin J."/>
            <person name="Shpakovski G.V."/>
            <person name="Ussery D."/>
            <person name="Barrell B.G."/>
            <person name="Nurse P."/>
        </authorList>
    </citation>
    <scope>NUCLEOTIDE SEQUENCE [LARGE SCALE GENOMIC DNA]</scope>
    <source>
        <strain>972 / ATCC 24843</strain>
    </source>
</reference>
<reference key="2">
    <citation type="journal article" date="2000" name="Genes Cells">
        <title>Large-scale screening of intracellular protein localization in living fission yeast cells by the use of a GFP-fusion genomic DNA library.</title>
        <authorList>
            <person name="Ding D.-Q."/>
            <person name="Tomita Y."/>
            <person name="Yamamoto A."/>
            <person name="Chikashige Y."/>
            <person name="Haraguchi T."/>
            <person name="Hiraoka Y."/>
        </authorList>
    </citation>
    <scope>NUCLEOTIDE SEQUENCE [LARGE SCALE GENOMIC DNA] OF 142-348</scope>
    <scope>SUBCELLULAR LOCATION</scope>
    <source>
        <strain>ATCC 38364 / 968</strain>
    </source>
</reference>
<reference key="3">
    <citation type="journal article" date="2004" name="Yeast">
        <title>Identification of genes encoding putative nucleoporins and transport factors in the fission yeast Schizosaccharomyces pombe: a deletion analysis.</title>
        <authorList>
            <person name="Chen X.Q."/>
            <person name="Du X."/>
            <person name="Liu J."/>
            <person name="Balasubramanian M.K."/>
            <person name="Balasundaram D."/>
        </authorList>
    </citation>
    <scope>FUNCTION</scope>
    <scope>SUBCELLULAR LOCATION</scope>
</reference>
<reference key="4">
    <citation type="journal article" date="2006" name="Nat. Biotechnol.">
        <title>ORFeome cloning and global analysis of protein localization in the fission yeast Schizosaccharomyces pombe.</title>
        <authorList>
            <person name="Matsuyama A."/>
            <person name="Arai R."/>
            <person name="Yashiroda Y."/>
            <person name="Shirai A."/>
            <person name="Kamata A."/>
            <person name="Sekido S."/>
            <person name="Kobayashi Y."/>
            <person name="Hashimoto A."/>
            <person name="Hamamoto M."/>
            <person name="Hiraoka Y."/>
            <person name="Horinouchi S."/>
            <person name="Yoshida M."/>
        </authorList>
    </citation>
    <scope>SUBCELLULAR LOCATION [LARGE SCALE ANALYSIS]</scope>
</reference>
<reference key="5">
    <citation type="journal article" date="2009" name="EMBO J.">
        <title>Oxygen-dependent binding of Nro1 to the prolyl hydroxylase Ofd1 regulates SREBP degradation in yeast.</title>
        <authorList>
            <person name="Lee C.Y."/>
            <person name="Stewart E.V."/>
            <person name="Hughes B.T."/>
            <person name="Espenshade P.J."/>
        </authorList>
    </citation>
    <scope>FUNCTION</scope>
    <scope>SUBCELLULAR LOCATION</scope>
    <scope>INTERACTION WITH OFD1</scope>
</reference>
<evidence type="ECO:0000250" key="1"/>
<evidence type="ECO:0000256" key="2">
    <source>
        <dbReference type="SAM" id="MobiDB-lite"/>
    </source>
</evidence>
<evidence type="ECO:0000269" key="3">
    <source>
    </source>
</evidence>
<evidence type="ECO:0000269" key="4">
    <source>
    </source>
</evidence>
<evidence type="ECO:0000305" key="5"/>
<evidence type="ECO:0007829" key="6">
    <source>
        <dbReference type="PDB" id="3MSV"/>
    </source>
</evidence>
<evidence type="ECO:0007829" key="7">
    <source>
        <dbReference type="PDB" id="3QTM"/>
    </source>
</evidence>
<feature type="chain" id="PRO_0000116807" description="Negative regulator of ofd1">
    <location>
        <begin position="1"/>
        <end position="393"/>
    </location>
</feature>
<feature type="region of interest" description="Disordered" evidence="2">
    <location>
        <begin position="1"/>
        <end position="51"/>
    </location>
</feature>
<feature type="compositionally biased region" description="Basic and acidic residues" evidence="2">
    <location>
        <begin position="19"/>
        <end position="28"/>
    </location>
</feature>
<feature type="compositionally biased region" description="Polar residues" evidence="2">
    <location>
        <begin position="32"/>
        <end position="47"/>
    </location>
</feature>
<feature type="sequence conflict" description="In Ref. 2." evidence="5" ref="2">
    <original>NTEES</original>
    <variation>IPKNP</variation>
    <location>
        <begin position="142"/>
        <end position="146"/>
    </location>
</feature>
<feature type="helix" evidence="6">
    <location>
        <begin position="14"/>
        <end position="32"/>
    </location>
</feature>
<feature type="helix" evidence="7">
    <location>
        <begin position="62"/>
        <end position="81"/>
    </location>
</feature>
<feature type="helix" evidence="7">
    <location>
        <begin position="85"/>
        <end position="105"/>
    </location>
</feature>
<feature type="helix" evidence="7">
    <location>
        <begin position="109"/>
        <end position="111"/>
    </location>
</feature>
<feature type="helix" evidence="7">
    <location>
        <begin position="114"/>
        <end position="129"/>
    </location>
</feature>
<feature type="helix" evidence="7">
    <location>
        <begin position="131"/>
        <end position="134"/>
    </location>
</feature>
<feature type="helix" evidence="7">
    <location>
        <begin position="135"/>
        <end position="137"/>
    </location>
</feature>
<feature type="helix" evidence="7">
    <location>
        <begin position="144"/>
        <end position="157"/>
    </location>
</feature>
<feature type="helix" evidence="7">
    <location>
        <begin position="158"/>
        <end position="160"/>
    </location>
</feature>
<feature type="strand" evidence="7">
    <location>
        <begin position="161"/>
        <end position="163"/>
    </location>
</feature>
<feature type="helix" evidence="7">
    <location>
        <begin position="166"/>
        <end position="189"/>
    </location>
</feature>
<feature type="turn" evidence="7">
    <location>
        <begin position="191"/>
        <end position="195"/>
    </location>
</feature>
<feature type="helix" evidence="7">
    <location>
        <begin position="198"/>
        <end position="217"/>
    </location>
</feature>
<feature type="turn" evidence="7">
    <location>
        <begin position="229"/>
        <end position="234"/>
    </location>
</feature>
<feature type="helix" evidence="7">
    <location>
        <begin position="235"/>
        <end position="244"/>
    </location>
</feature>
<feature type="helix" evidence="7">
    <location>
        <begin position="246"/>
        <end position="248"/>
    </location>
</feature>
<feature type="helix" evidence="7">
    <location>
        <begin position="251"/>
        <end position="267"/>
    </location>
</feature>
<feature type="helix" evidence="7">
    <location>
        <begin position="276"/>
        <end position="301"/>
    </location>
</feature>
<feature type="helix" evidence="7">
    <location>
        <begin position="309"/>
        <end position="332"/>
    </location>
</feature>
<feature type="helix" evidence="7">
    <location>
        <begin position="336"/>
        <end position="338"/>
    </location>
</feature>
<feature type="helix" evidence="7">
    <location>
        <begin position="339"/>
        <end position="352"/>
    </location>
</feature>
<feature type="helix" evidence="7">
    <location>
        <begin position="356"/>
        <end position="375"/>
    </location>
</feature>
<feature type="helix" evidence="7">
    <location>
        <begin position="382"/>
        <end position="390"/>
    </location>
</feature>
<organism>
    <name type="scientific">Schizosaccharomyces pombe (strain 972 / ATCC 24843)</name>
    <name type="common">Fission yeast</name>
    <dbReference type="NCBI Taxonomy" id="284812"/>
    <lineage>
        <taxon>Eukaryota</taxon>
        <taxon>Fungi</taxon>
        <taxon>Dikarya</taxon>
        <taxon>Ascomycota</taxon>
        <taxon>Taphrinomycotina</taxon>
        <taxon>Schizosaccharomycetes</taxon>
        <taxon>Schizosaccharomycetales</taxon>
        <taxon>Schizosaccharomycetaceae</taxon>
        <taxon>Schizosaccharomyces</taxon>
    </lineage>
</organism>
<comment type="function">
    <text evidence="1 3 4">Required for correct translation termination (By similarity). Positive regulator of the stability of the N-terminal transcription factor domain (Sre1N) of sre1 which is released from the membrane and enters the nucleus to activate hypoxic gene expression. Also acts as a direct inhibitor of ofd1. Functions probably by inhibiting the ability of the ofd1 to accelerate Sre1N degradation in absence of oxygen.</text>
</comment>
<comment type="subunit">
    <text evidence="4">Interacts with ofd1.</text>
</comment>
<comment type="interaction">
    <interactant intactId="EBI-8549032">
        <id>Q9USJ7</id>
    </interactant>
    <interactant intactId="EBI-8549003">
        <id>Q11120</id>
        <label>ofd1</label>
    </interactant>
    <organismsDiffer>false</organismsDiffer>
    <experiments>11</experiments>
</comment>
<comment type="subcellular location">
    <subcellularLocation>
        <location>Cytoplasm</location>
    </subcellularLocation>
    <subcellularLocation>
        <location>Nucleus</location>
    </subcellularLocation>
</comment>
<comment type="similarity">
    <text evidence="5">Belongs to the ETT1 family.</text>
</comment>
<gene>
    <name type="primary">nro1</name>
    <name type="ORF">SPCC4B3.07</name>
</gene>